<reference key="1">
    <citation type="journal article" date="1994" name="Yeast">
        <title>The complete sequence of a 33 kb fragment on the right arm of chromosome II from Saccharomyces cerevisiae reveals 16 open reading frames, including ten new open reading frames, five previously identified genes and a homologue of the SCO1 gene.</title>
        <authorList>
            <person name="Smits P.H.M."/>
            <person name="de Haan M."/>
            <person name="Maat C."/>
            <person name="Grivell L.A."/>
        </authorList>
    </citation>
    <scope>NUCLEOTIDE SEQUENCE [GENOMIC DNA]</scope>
    <source>
        <strain>ATCC 204508 / S288c</strain>
    </source>
</reference>
<reference key="2">
    <citation type="journal article" date="1994" name="EMBO J.">
        <title>Complete DNA sequence of yeast chromosome II.</title>
        <authorList>
            <person name="Feldmann H."/>
            <person name="Aigle M."/>
            <person name="Aljinovic G."/>
            <person name="Andre B."/>
            <person name="Baclet M.C."/>
            <person name="Barthe C."/>
            <person name="Baur A."/>
            <person name="Becam A.-M."/>
            <person name="Biteau N."/>
            <person name="Boles E."/>
            <person name="Brandt T."/>
            <person name="Brendel M."/>
            <person name="Brueckner M."/>
            <person name="Bussereau F."/>
            <person name="Christiansen C."/>
            <person name="Contreras R."/>
            <person name="Crouzet M."/>
            <person name="Cziepluch C."/>
            <person name="Demolis N."/>
            <person name="Delaveau T."/>
            <person name="Doignon F."/>
            <person name="Domdey H."/>
            <person name="Duesterhus S."/>
            <person name="Dubois E."/>
            <person name="Dujon B."/>
            <person name="El Bakkoury M."/>
            <person name="Entian K.-D."/>
            <person name="Feuermann M."/>
            <person name="Fiers W."/>
            <person name="Fobo G.M."/>
            <person name="Fritz C."/>
            <person name="Gassenhuber J."/>
            <person name="Glansdorff N."/>
            <person name="Goffeau A."/>
            <person name="Grivell L.A."/>
            <person name="de Haan M."/>
            <person name="Hein C."/>
            <person name="Herbert C.J."/>
            <person name="Hollenberg C.P."/>
            <person name="Holmstroem K."/>
            <person name="Jacq C."/>
            <person name="Jacquet M."/>
            <person name="Jauniaux J.-C."/>
            <person name="Jonniaux J.-L."/>
            <person name="Kallesoee T."/>
            <person name="Kiesau P."/>
            <person name="Kirchrath L."/>
            <person name="Koetter P."/>
            <person name="Korol S."/>
            <person name="Liebl S."/>
            <person name="Logghe M."/>
            <person name="Lohan A.J.E."/>
            <person name="Louis E.J."/>
            <person name="Li Z.Y."/>
            <person name="Maat M.J."/>
            <person name="Mallet L."/>
            <person name="Mannhaupt G."/>
            <person name="Messenguy F."/>
            <person name="Miosga T."/>
            <person name="Molemans F."/>
            <person name="Mueller S."/>
            <person name="Nasr F."/>
            <person name="Obermaier B."/>
            <person name="Perea J."/>
            <person name="Pierard A."/>
            <person name="Piravandi E."/>
            <person name="Pohl F.M."/>
            <person name="Pohl T.M."/>
            <person name="Potier S."/>
            <person name="Proft M."/>
            <person name="Purnelle B."/>
            <person name="Ramezani Rad M."/>
            <person name="Rieger M."/>
            <person name="Rose M."/>
            <person name="Schaaff-Gerstenschlaeger I."/>
            <person name="Scherens B."/>
            <person name="Schwarzlose C."/>
            <person name="Skala J."/>
            <person name="Slonimski P.P."/>
            <person name="Smits P.H.M."/>
            <person name="Souciet J.-L."/>
            <person name="Steensma H.Y."/>
            <person name="Stucka R."/>
            <person name="Urrestarazu L.A."/>
            <person name="van der Aart Q.J.M."/>
            <person name="Van Dyck L."/>
            <person name="Vassarotti A."/>
            <person name="Vetter I."/>
            <person name="Vierendeels F."/>
            <person name="Vissers S."/>
            <person name="Wagner G."/>
            <person name="de Wergifosse P."/>
            <person name="Wolfe K.H."/>
            <person name="Zagulski M."/>
            <person name="Zimmermann F.K."/>
            <person name="Mewes H.-W."/>
            <person name="Kleine K."/>
        </authorList>
    </citation>
    <scope>NUCLEOTIDE SEQUENCE [LARGE SCALE GENOMIC DNA]</scope>
    <source>
        <strain>ATCC 204508 / S288c</strain>
    </source>
</reference>
<reference key="3">
    <citation type="journal article" date="2014" name="G3 (Bethesda)">
        <title>The reference genome sequence of Saccharomyces cerevisiae: Then and now.</title>
        <authorList>
            <person name="Engel S.R."/>
            <person name="Dietrich F.S."/>
            <person name="Fisk D.G."/>
            <person name="Binkley G."/>
            <person name="Balakrishnan R."/>
            <person name="Costanzo M.C."/>
            <person name="Dwight S.S."/>
            <person name="Hitz B.C."/>
            <person name="Karra K."/>
            <person name="Nash R.S."/>
            <person name="Weng S."/>
            <person name="Wong E.D."/>
            <person name="Lloyd P."/>
            <person name="Skrzypek M.S."/>
            <person name="Miyasato S.R."/>
            <person name="Simison M."/>
            <person name="Cherry J.M."/>
        </authorList>
    </citation>
    <scope>GENOME REANNOTATION</scope>
    <source>
        <strain>ATCC 204508 / S288c</strain>
    </source>
</reference>
<reference key="4">
    <citation type="journal article" date="2007" name="Genome Res.">
        <title>Approaching a complete repository of sequence-verified protein-encoding clones for Saccharomyces cerevisiae.</title>
        <authorList>
            <person name="Hu Y."/>
            <person name="Rolfs A."/>
            <person name="Bhullar B."/>
            <person name="Murthy T.V.S."/>
            <person name="Zhu C."/>
            <person name="Berger M.F."/>
            <person name="Camargo A.A."/>
            <person name="Kelley F."/>
            <person name="McCarron S."/>
            <person name="Jepson D."/>
            <person name="Richardson A."/>
            <person name="Raphael J."/>
            <person name="Moreira D."/>
            <person name="Taycher E."/>
            <person name="Zuo D."/>
            <person name="Mohr S."/>
            <person name="Kane M.F."/>
            <person name="Williamson J."/>
            <person name="Simpson A.J.G."/>
            <person name="Bulyk M.L."/>
            <person name="Harlow E."/>
            <person name="Marsischky G."/>
            <person name="Kolodner R.D."/>
            <person name="LaBaer J."/>
        </authorList>
    </citation>
    <scope>NUCLEOTIDE SEQUENCE [GENOMIC DNA]</scope>
    <source>
        <strain>ATCC 204508 / S288c</strain>
    </source>
</reference>
<reference key="5">
    <citation type="journal article" date="1995" name="J. Bacteriol.">
        <title>Sterol uptake induced by an impairment of pyridoxal phosphate synthesis in Saccharomyces cerevisiae: cloning and sequencing of the PDX3 gene encoding pyridoxine (pyridoxamine) phosphate oxidase.</title>
        <authorList>
            <person name="Loubbardi A."/>
            <person name="Karst F."/>
            <person name="Guilloton M."/>
            <person name="Marcireau C."/>
        </authorList>
    </citation>
    <scope>NUCLEOTIDE SEQUENCE [GENOMIC DNA] OF 1-55</scope>
</reference>
<reference key="6">
    <citation type="journal article" date="1996" name="Mol. Cell. Biol.">
        <title>A novel methyltransferase (Hmt1p) modifies poly(A)+-RNA-binding proteins.</title>
        <authorList>
            <person name="Henry M.F."/>
            <person name="Silver P.A."/>
        </authorList>
    </citation>
    <scope>FUNCTION</scope>
    <scope>CATALYTIC ACTIVITY</scope>
    <scope>SUBCELLULAR LOCATION</scope>
</reference>
<reference key="7">
    <citation type="journal article" date="1996" name="J. Biol. Chem.">
        <title>The predominant protein-arginine methyltransferase from Saccharomyces cerevisiae.</title>
        <authorList>
            <person name="Gary J.D."/>
            <person name="Lin W.-J."/>
            <person name="Yang M.C."/>
            <person name="Herschmann H.R."/>
            <person name="Clarke S."/>
        </authorList>
    </citation>
    <scope>FUNCTION</scope>
    <scope>CATALYTIC ACTIVITY</scope>
</reference>
<reference key="8">
    <citation type="journal article" date="1998" name="Genes Dev.">
        <title>Arginine methylation facilitates the nuclear export of hnRNP proteins.</title>
        <authorList>
            <person name="Shen E.C."/>
            <person name="Henry M.F."/>
            <person name="Weiss V.H."/>
            <person name="Valentini S.R."/>
            <person name="Silver P.A."/>
            <person name="Lee M.S."/>
        </authorList>
    </citation>
    <scope>FUNCTION</scope>
</reference>
<reference key="9">
    <citation type="journal article" date="2000" name="J. Biol. Chem.">
        <title>Analysis of the yeast arginine methyltransferase Hmt1p/Rmt1p and its in vivo function. Cofactor binding and substrate interactions.</title>
        <authorList>
            <person name="McBride A.E."/>
            <person name="Weiss V.H."/>
            <person name="Kim H.K."/>
            <person name="Hogle J.M."/>
            <person name="Silver P.A."/>
        </authorList>
    </citation>
    <scope>FUNCTION</scope>
    <scope>MUTAGENESIS OF GLU-18 AND GLY-68</scope>
</reference>
<reference key="10">
    <citation type="journal article" date="2002" name="J. Biol. Chem.">
        <title>Nab2p is required for poly(A) RNA export in Saccharomyces cerevisiae and is regulated by arginine methylation via Hmt1p.</title>
        <authorList>
            <person name="Green D.M."/>
            <person name="Marfatia K.A."/>
            <person name="Crafton E.B."/>
            <person name="Zhang X."/>
            <person name="Cheng X."/>
            <person name="Corbett A.H."/>
        </authorList>
    </citation>
    <scope>FUNCTION</scope>
</reference>
<reference key="11">
    <citation type="journal article" date="2002" name="J. Biol. Chem.">
        <title>Disruptor of telomeric silencing-1 is a chromatin-specific histone H3 methyltransferase.</title>
        <authorList>
            <person name="Lacoste N."/>
            <person name="Utley R.T."/>
            <person name="Hunter J.M."/>
            <person name="Poirier G.G."/>
            <person name="Cote J."/>
        </authorList>
    </citation>
    <scope>FUNCTION</scope>
</reference>
<reference key="12">
    <citation type="journal article" date="2003" name="Nature">
        <title>Global analysis of protein expression in yeast.</title>
        <authorList>
            <person name="Ghaemmaghami S."/>
            <person name="Huh W.-K."/>
            <person name="Bower K."/>
            <person name="Howson R.W."/>
            <person name="Belle A."/>
            <person name="Dephoure N."/>
            <person name="O'Shea E.K."/>
            <person name="Weissman J.S."/>
        </authorList>
    </citation>
    <scope>LEVEL OF PROTEIN EXPRESSION [LARGE SCALE ANALYSIS]</scope>
</reference>
<reference key="13">
    <citation type="journal article" date="2003" name="RNA">
        <title>In vivo analysis of nucleolar proteins modified by the yeast arginine methyltransferase Hmt1/Rmt1p.</title>
        <authorList>
            <person name="Xu C."/>
            <person name="Henry P.A."/>
            <person name="Setya A."/>
            <person name="Henry M.F."/>
        </authorList>
    </citation>
    <scope>FUNCTION</scope>
</reference>
<reference key="14">
    <citation type="journal article" date="2004" name="Genes Dev.">
        <title>Arginine methyltransferase affects interactions and recruitment of mRNA processing and export factors.</title>
        <authorList>
            <person name="Yu M.C."/>
            <person name="Bachand F."/>
            <person name="McBride A.E."/>
            <person name="Komili S."/>
            <person name="Casolari J.M."/>
            <person name="Silver P.A."/>
        </authorList>
    </citation>
    <scope>FUNCTION</scope>
</reference>
<reference key="15">
    <citation type="journal article" date="2006" name="Genes Dev.">
        <title>The role of protein arginine methylation in the formation of silent chromatin.</title>
        <authorList>
            <person name="Yu M.C."/>
            <person name="Lamming D.W."/>
            <person name="Eskin J.A."/>
            <person name="Sinclair D.A."/>
            <person name="Silver P.A."/>
        </authorList>
    </citation>
    <scope>FUNCTION</scope>
</reference>
<reference key="16">
    <citation type="journal article" date="2010" name="Biochem. Biophys. Res. Commun.">
        <title>Rmt1 catalyzes zinc-finger independent arginine methylation of ribosomal protein Rps2 in Saccharomyces cerevisiae.</title>
        <authorList>
            <person name="Lipson R.S."/>
            <person name="Webb K.J."/>
            <person name="Clarke S.G."/>
        </authorList>
    </citation>
    <scope>FUNCTION</scope>
</reference>
<reference key="17">
    <citation type="journal article" date="2010" name="Mol. Cell. Biol.">
        <title>Protein arginine methylation facilitates cotranscriptional recruitment of pre-mRNA splicing factors.</title>
        <authorList>
            <person name="Chen Y.C."/>
            <person name="Milliman E.J."/>
            <person name="Goulet I."/>
            <person name="Cote J."/>
            <person name="Jackson C.A."/>
            <person name="Vollbracht J.A."/>
            <person name="Yu M.C."/>
        </authorList>
    </citation>
    <scope>FUNCTION</scope>
</reference>
<reference key="18">
    <citation type="journal article" date="2010" name="Nucleic Acids Res.">
        <title>Yeast arginine methyltransferase Hmt1p regulates transcription elongation and termination by methylating Npl3p.</title>
        <authorList>
            <person name="Wong C.M."/>
            <person name="Tang H.M."/>
            <person name="Kong K.Y."/>
            <person name="Wong G.W."/>
            <person name="Qiu H."/>
            <person name="Jin D.Y."/>
            <person name="Hinnebusch A.G."/>
        </authorList>
    </citation>
    <scope>FUNCTION</scope>
</reference>
<reference key="19">
    <citation type="journal article" date="2012" name="Proteomics">
        <title>Proteomic analysis of interactors for yeast protein arginine methyltransferase Hmt1 reveals novel substrate and insights into additional biological roles.</title>
        <authorList>
            <person name="Jackson C.A."/>
            <person name="Yadav N."/>
            <person name="Min S."/>
            <person name="Li J."/>
            <person name="Milliman E.J."/>
            <person name="Qu J."/>
            <person name="Chen Y.C."/>
            <person name="Yu M.C."/>
        </authorList>
    </citation>
    <scope>FUNCTION</scope>
    <scope>INTERACTION WITH BRE5; MTR4; SNF2; SUM1 AND SSD1</scope>
</reference>
<reference key="20">
    <citation type="journal article" date="2000" name="Nat. Struct. Biol.">
        <title>The structure and oligomerization of the yeast arginine methyltransferase, Hmt1.</title>
        <authorList>
            <person name="Weiss V.H."/>
            <person name="McBride A.E."/>
            <person name="Soriano M.A."/>
            <person name="Filman D.J."/>
            <person name="Silver P.A."/>
            <person name="Hogle J.M."/>
        </authorList>
    </citation>
    <scope>X-RAY CRYSTALLOGRAPHY (2.9 ANGSTROMS) OF 24-348</scope>
    <scope>FUNCTION</scope>
    <scope>INTERACTION WITH NPL3</scope>
    <scope>SUBUNIT</scope>
</reference>
<keyword id="KW-0002">3D-structure</keyword>
<keyword id="KW-0489">Methyltransferase</keyword>
<keyword id="KW-0539">Nucleus</keyword>
<keyword id="KW-1185">Reference proteome</keyword>
<keyword id="KW-0949">S-adenosyl-L-methionine</keyword>
<keyword id="KW-0808">Transferase</keyword>
<feature type="chain" id="PRO_0000212341" description="Protein arginine N-methyltransferase 1">
    <location>
        <begin position="1"/>
        <end position="348"/>
    </location>
</feature>
<feature type="domain" description="SAM-dependent MTase PRMT-type" evidence="2">
    <location>
        <begin position="20"/>
        <end position="322"/>
    </location>
</feature>
<feature type="active site" evidence="1">
    <location>
        <position position="132"/>
    </location>
</feature>
<feature type="active site" evidence="1">
    <location>
        <position position="141"/>
    </location>
</feature>
<feature type="binding site" evidence="1">
    <location>
        <position position="33"/>
    </location>
    <ligand>
        <name>S-adenosyl-L-methionine</name>
        <dbReference type="ChEBI" id="CHEBI:59789"/>
    </ligand>
</feature>
<feature type="binding site" evidence="1">
    <location>
        <position position="42"/>
    </location>
    <ligand>
        <name>S-adenosyl-L-methionine</name>
        <dbReference type="ChEBI" id="CHEBI:59789"/>
    </ligand>
</feature>
<feature type="binding site" evidence="1">
    <location>
        <position position="66"/>
    </location>
    <ligand>
        <name>S-adenosyl-L-methionine</name>
        <dbReference type="ChEBI" id="CHEBI:59789"/>
    </ligand>
</feature>
<feature type="binding site" evidence="1">
    <location>
        <position position="88"/>
    </location>
    <ligand>
        <name>S-adenosyl-L-methionine</name>
        <dbReference type="ChEBI" id="CHEBI:59789"/>
    </ligand>
</feature>
<feature type="binding site" evidence="1">
    <location>
        <position position="117"/>
    </location>
    <ligand>
        <name>S-adenosyl-L-methionine</name>
        <dbReference type="ChEBI" id="CHEBI:59789"/>
    </ligand>
</feature>
<feature type="mutagenesis site" description="Cold-sensitive; reduces catalytic activity more than 20-fold at 14 degrees Celsius." evidence="3">
    <original>E</original>
    <variation>V</variation>
    <location>
        <position position="18"/>
    </location>
</feature>
<feature type="mutagenesis site" description="Reduces catalytic activity between 5- to 25-fold." evidence="3">
    <original>G</original>
    <variation>A</variation>
    <location>
        <position position="68"/>
    </location>
</feature>
<feature type="mutagenesis site" description="Abolishes catalytic activity." evidence="3">
    <original>G</original>
    <variation>R</variation>
    <location>
        <position position="68"/>
    </location>
</feature>
<feature type="helix" evidence="25">
    <location>
        <begin position="30"/>
        <end position="37"/>
    </location>
</feature>
<feature type="helix" evidence="25">
    <location>
        <begin position="40"/>
        <end position="57"/>
    </location>
</feature>
<feature type="strand" evidence="25">
    <location>
        <begin position="61"/>
        <end position="65"/>
    </location>
</feature>
<feature type="helix" evidence="25">
    <location>
        <begin position="71"/>
        <end position="78"/>
    </location>
</feature>
<feature type="strand" evidence="25">
    <location>
        <begin position="82"/>
        <end position="90"/>
    </location>
</feature>
<feature type="helix" evidence="25">
    <location>
        <begin position="92"/>
        <end position="102"/>
    </location>
</feature>
<feature type="turn" evidence="25">
    <location>
        <begin position="106"/>
        <end position="108"/>
    </location>
</feature>
<feature type="strand" evidence="25">
    <location>
        <begin position="109"/>
        <end position="114"/>
    </location>
</feature>
<feature type="turn" evidence="25">
    <location>
        <begin position="116"/>
        <end position="118"/>
    </location>
</feature>
<feature type="strand" evidence="25">
    <location>
        <begin position="122"/>
        <end position="124"/>
    </location>
</feature>
<feature type="strand" evidence="25">
    <location>
        <begin position="126"/>
        <end position="131"/>
    </location>
</feature>
<feature type="helix" evidence="25">
    <location>
        <begin position="144"/>
        <end position="154"/>
    </location>
</feature>
<feature type="strand" evidence="25">
    <location>
        <begin position="155"/>
        <end position="163"/>
    </location>
</feature>
<feature type="strand" evidence="25">
    <location>
        <begin position="165"/>
        <end position="173"/>
    </location>
</feature>
<feature type="helix" evidence="25">
    <location>
        <begin position="176"/>
        <end position="185"/>
    </location>
</feature>
<feature type="helix" evidence="25">
    <location>
        <begin position="197"/>
        <end position="201"/>
    </location>
</feature>
<feature type="strand" evidence="25">
    <location>
        <begin position="206"/>
        <end position="208"/>
    </location>
</feature>
<feature type="helix" evidence="25">
    <location>
        <begin position="212"/>
        <end position="214"/>
    </location>
</feature>
<feature type="strand" evidence="25">
    <location>
        <begin position="220"/>
        <end position="226"/>
    </location>
</feature>
<feature type="turn" evidence="25">
    <location>
        <begin position="227"/>
        <end position="229"/>
    </location>
</feature>
<feature type="helix" evidence="25">
    <location>
        <begin position="232"/>
        <end position="235"/>
    </location>
</feature>
<feature type="strand" evidence="25">
    <location>
        <begin position="236"/>
        <end position="245"/>
    </location>
</feature>
<feature type="strand" evidence="25">
    <location>
        <begin position="250"/>
        <end position="261"/>
    </location>
</feature>
<feature type="strand" evidence="25">
    <location>
        <begin position="272"/>
        <end position="274"/>
    </location>
</feature>
<feature type="strand" evidence="25">
    <location>
        <begin position="286"/>
        <end position="296"/>
    </location>
</feature>
<feature type="strand" evidence="25">
    <location>
        <begin position="302"/>
        <end position="312"/>
    </location>
</feature>
<feature type="strand" evidence="25">
    <location>
        <begin position="315"/>
        <end position="328"/>
    </location>
</feature>
<feature type="helix" evidence="25">
    <location>
        <begin position="334"/>
        <end position="337"/>
    </location>
</feature>
<feature type="strand" evidence="25">
    <location>
        <begin position="339"/>
        <end position="347"/>
    </location>
</feature>
<accession>P38074</accession>
<accession>D6VQ34</accession>
<proteinExistence type="evidence at protein level"/>
<gene>
    <name evidence="21" type="primary">HMT1</name>
    <name evidence="19" type="synonym">ODP1</name>
    <name evidence="20" type="synonym">RMT1</name>
    <name evidence="24" type="ordered locus">YBR034C</name>
    <name type="ORF">YBR0320</name>
</gene>
<name>ANM1_YEAST</name>
<protein>
    <recommendedName>
        <fullName evidence="20">Protein arginine N-methyltransferase 1</fullName>
        <ecNumber evidence="15 23">2.1.1.319</ecNumber>
    </recommendedName>
    <alternativeName>
        <fullName evidence="22">Major type I protein arginine N-methyltransferase</fullName>
        <shortName evidence="18">Type I PRMT</shortName>
    </alternativeName>
    <alternativeName>
        <fullName evidence="21">hnRNP arginine N-methyltransferase</fullName>
    </alternativeName>
</protein>
<dbReference type="EC" id="2.1.1.319" evidence="15 23"/>
<dbReference type="EMBL" id="X76078">
    <property type="protein sequence ID" value="CAA53689.1"/>
    <property type="molecule type" value="Genomic_DNA"/>
</dbReference>
<dbReference type="EMBL" id="Z35903">
    <property type="protein sequence ID" value="CAA84976.1"/>
    <property type="molecule type" value="Genomic_DNA"/>
</dbReference>
<dbReference type="EMBL" id="X76992">
    <property type="protein sequence ID" value="CAA54296.1"/>
    <property type="molecule type" value="Genomic_DNA"/>
</dbReference>
<dbReference type="EMBL" id="AY557869">
    <property type="protein sequence ID" value="AAS56195.1"/>
    <property type="molecule type" value="Genomic_DNA"/>
</dbReference>
<dbReference type="EMBL" id="BK006936">
    <property type="protein sequence ID" value="DAA07154.1"/>
    <property type="molecule type" value="Genomic_DNA"/>
</dbReference>
<dbReference type="PIR" id="S45890">
    <property type="entry name" value="S45890"/>
</dbReference>
<dbReference type="RefSeq" id="NP_009590.1">
    <property type="nucleotide sequence ID" value="NM_001178382.1"/>
</dbReference>
<dbReference type="PDB" id="1G6Q">
    <property type="method" value="X-ray"/>
    <property type="resolution" value="2.90 A"/>
    <property type="chains" value="1/2/3/4/5/6=21-348"/>
</dbReference>
<dbReference type="PDBsum" id="1G6Q"/>
<dbReference type="SMR" id="P38074"/>
<dbReference type="BioGRID" id="32735">
    <property type="interactions" value="451"/>
</dbReference>
<dbReference type="DIP" id="DIP-2608N"/>
<dbReference type="FunCoup" id="P38074">
    <property type="interactions" value="1136"/>
</dbReference>
<dbReference type="IntAct" id="P38074">
    <property type="interactions" value="264"/>
</dbReference>
<dbReference type="MINT" id="P38074"/>
<dbReference type="STRING" id="4932.YBR034C"/>
<dbReference type="iPTMnet" id="P38074"/>
<dbReference type="PaxDb" id="4932-YBR034C"/>
<dbReference type="PeptideAtlas" id="P38074"/>
<dbReference type="EnsemblFungi" id="YBR034C_mRNA">
    <property type="protein sequence ID" value="YBR034C"/>
    <property type="gene ID" value="YBR034C"/>
</dbReference>
<dbReference type="GeneID" id="852322"/>
<dbReference type="KEGG" id="sce:YBR034C"/>
<dbReference type="AGR" id="SGD:S000000238"/>
<dbReference type="SGD" id="S000000238">
    <property type="gene designation" value="HMT1"/>
</dbReference>
<dbReference type="VEuPathDB" id="FungiDB:YBR034C"/>
<dbReference type="eggNOG" id="KOG1499">
    <property type="taxonomic scope" value="Eukaryota"/>
</dbReference>
<dbReference type="GeneTree" id="ENSGT00940000175369"/>
<dbReference type="HOGENOM" id="CLU_017375_1_1_1"/>
<dbReference type="InParanoid" id="P38074"/>
<dbReference type="OMA" id="CTHTKVK"/>
<dbReference type="OrthoDB" id="7848332at2759"/>
<dbReference type="BioCyc" id="YEAST:G3O-29011-MONOMER"/>
<dbReference type="Reactome" id="R-SCE-3214858">
    <property type="pathway name" value="RMTs methylate histone arginines"/>
</dbReference>
<dbReference type="Reactome" id="R-SCE-8876725">
    <property type="pathway name" value="Protein methylation"/>
</dbReference>
<dbReference type="Reactome" id="R-SCE-9018519">
    <property type="pathway name" value="Estrogen-dependent gene expression"/>
</dbReference>
<dbReference type="BioGRID-ORCS" id="852322">
    <property type="hits" value="1 hit in 10 CRISPR screens"/>
</dbReference>
<dbReference type="EvolutionaryTrace" id="P38074"/>
<dbReference type="PRO" id="PR:P38074"/>
<dbReference type="Proteomes" id="UP000002311">
    <property type="component" value="Chromosome II"/>
</dbReference>
<dbReference type="RNAct" id="P38074">
    <property type="molecule type" value="protein"/>
</dbReference>
<dbReference type="GO" id="GO:0005634">
    <property type="term" value="C:nucleus"/>
    <property type="evidence" value="ECO:0000314"/>
    <property type="project" value="SGD"/>
</dbReference>
<dbReference type="GO" id="GO:0042054">
    <property type="term" value="F:histone methyltransferase activity"/>
    <property type="evidence" value="ECO:0000318"/>
    <property type="project" value="GO_Central"/>
</dbReference>
<dbReference type="GO" id="GO:0042802">
    <property type="term" value="F:identical protein binding"/>
    <property type="evidence" value="ECO:0000353"/>
    <property type="project" value="IntAct"/>
</dbReference>
<dbReference type="GO" id="GO:0016274">
    <property type="term" value="F:protein-arginine N-methyltransferase activity"/>
    <property type="evidence" value="ECO:0000318"/>
    <property type="project" value="GO_Central"/>
</dbReference>
<dbReference type="GO" id="GO:0035242">
    <property type="term" value="F:protein-arginine omega-N asymmetric methyltransferase activity"/>
    <property type="evidence" value="ECO:0000314"/>
    <property type="project" value="SGD"/>
</dbReference>
<dbReference type="GO" id="GO:0035241">
    <property type="term" value="F:protein-arginine omega-N monomethyltransferase activity"/>
    <property type="evidence" value="ECO:0000314"/>
    <property type="project" value="SGD"/>
</dbReference>
<dbReference type="GO" id="GO:0006338">
    <property type="term" value="P:chromatin remodeling"/>
    <property type="evidence" value="ECO:0000318"/>
    <property type="project" value="GO_Central"/>
</dbReference>
<dbReference type="GO" id="GO:0046656">
    <property type="term" value="P:folic acid biosynthetic process"/>
    <property type="evidence" value="ECO:0000315"/>
    <property type="project" value="SGD"/>
</dbReference>
<dbReference type="GO" id="GO:0032259">
    <property type="term" value="P:methylation"/>
    <property type="evidence" value="ECO:0007669"/>
    <property type="project" value="UniProtKB-KW"/>
</dbReference>
<dbReference type="GO" id="GO:0006406">
    <property type="term" value="P:mRNA export from nucleus"/>
    <property type="evidence" value="ECO:0000315"/>
    <property type="project" value="SGD"/>
</dbReference>
<dbReference type="GO" id="GO:0060567">
    <property type="term" value="P:negative regulation of termination of DNA-templated transcription"/>
    <property type="evidence" value="ECO:0000315"/>
    <property type="project" value="SGD"/>
</dbReference>
<dbReference type="GO" id="GO:0032968">
    <property type="term" value="P:positive regulation of transcription elongation by RNA polymerase II"/>
    <property type="evidence" value="ECO:0000315"/>
    <property type="project" value="SGD"/>
</dbReference>
<dbReference type="GO" id="GO:0006355">
    <property type="term" value="P:regulation of DNA-templated transcription"/>
    <property type="evidence" value="ECO:0000318"/>
    <property type="project" value="GO_Central"/>
</dbReference>
<dbReference type="CDD" id="cd02440">
    <property type="entry name" value="AdoMet_MTases"/>
    <property type="match status" value="1"/>
</dbReference>
<dbReference type="FunFam" id="2.70.160.11:FF:000001">
    <property type="entry name" value="Blast:Protein arginine N-methyltransferase 1"/>
    <property type="match status" value="1"/>
</dbReference>
<dbReference type="FunFam" id="3.40.50.150:FF:000050">
    <property type="entry name" value="Hnrnp arginine n-methyltransferase"/>
    <property type="match status" value="1"/>
</dbReference>
<dbReference type="Gene3D" id="2.70.160.11">
    <property type="entry name" value="Hnrnp arginine n-methyltransferase1"/>
    <property type="match status" value="1"/>
</dbReference>
<dbReference type="Gene3D" id="3.40.50.150">
    <property type="entry name" value="Vaccinia Virus protein VP39"/>
    <property type="match status" value="1"/>
</dbReference>
<dbReference type="InterPro" id="IPR025799">
    <property type="entry name" value="Arg_MeTrfase"/>
</dbReference>
<dbReference type="InterPro" id="IPR055135">
    <property type="entry name" value="PRMT_dom"/>
</dbReference>
<dbReference type="InterPro" id="IPR029063">
    <property type="entry name" value="SAM-dependent_MTases_sf"/>
</dbReference>
<dbReference type="PANTHER" id="PTHR11006">
    <property type="entry name" value="PROTEIN ARGININE N-METHYLTRANSFERASE"/>
    <property type="match status" value="1"/>
</dbReference>
<dbReference type="PANTHER" id="PTHR11006:SF53">
    <property type="entry name" value="PROTEIN ARGININE N-METHYLTRANSFERASE 3"/>
    <property type="match status" value="1"/>
</dbReference>
<dbReference type="Pfam" id="PF06325">
    <property type="entry name" value="PrmA"/>
    <property type="match status" value="1"/>
</dbReference>
<dbReference type="Pfam" id="PF22528">
    <property type="entry name" value="PRMT_C"/>
    <property type="match status" value="1"/>
</dbReference>
<dbReference type="SUPFAM" id="SSF53335">
    <property type="entry name" value="S-adenosyl-L-methionine-dependent methyltransferases"/>
    <property type="match status" value="1"/>
</dbReference>
<dbReference type="PROSITE" id="PS51678">
    <property type="entry name" value="SAM_MT_PRMT"/>
    <property type="match status" value="1"/>
</dbReference>
<organism>
    <name type="scientific">Saccharomyces cerevisiae (strain ATCC 204508 / S288c)</name>
    <name type="common">Baker's yeast</name>
    <dbReference type="NCBI Taxonomy" id="559292"/>
    <lineage>
        <taxon>Eukaryota</taxon>
        <taxon>Fungi</taxon>
        <taxon>Dikarya</taxon>
        <taxon>Ascomycota</taxon>
        <taxon>Saccharomycotina</taxon>
        <taxon>Saccharomycetes</taxon>
        <taxon>Saccharomycetales</taxon>
        <taxon>Saccharomycetaceae</taxon>
        <taxon>Saccharomyces</taxon>
    </lineage>
</organism>
<evidence type="ECO:0000250" key="1">
    <source>
        <dbReference type="UniProtKB" id="Q63009"/>
    </source>
</evidence>
<evidence type="ECO:0000255" key="2">
    <source>
        <dbReference type="PROSITE-ProRule" id="PRU01015"/>
    </source>
</evidence>
<evidence type="ECO:0000269" key="3">
    <source>
    </source>
</evidence>
<evidence type="ECO:0000269" key="4">
    <source>
    </source>
</evidence>
<evidence type="ECO:0000269" key="5">
    <source>
    </source>
</evidence>
<evidence type="ECO:0000269" key="6">
    <source>
    </source>
</evidence>
<evidence type="ECO:0000269" key="7">
    <source>
    </source>
</evidence>
<evidence type="ECO:0000269" key="8">
    <source>
    </source>
</evidence>
<evidence type="ECO:0000269" key="9">
    <source>
    </source>
</evidence>
<evidence type="ECO:0000269" key="10">
    <source>
    </source>
</evidence>
<evidence type="ECO:0000269" key="11">
    <source>
    </source>
</evidence>
<evidence type="ECO:0000269" key="12">
    <source>
    </source>
</evidence>
<evidence type="ECO:0000269" key="13">
    <source>
    </source>
</evidence>
<evidence type="ECO:0000269" key="14">
    <source>
    </source>
</evidence>
<evidence type="ECO:0000269" key="15">
    <source>
    </source>
</evidence>
<evidence type="ECO:0000269" key="16">
    <source>
    </source>
</evidence>
<evidence type="ECO:0000269" key="17">
    <source>
    </source>
</evidence>
<evidence type="ECO:0000303" key="18">
    <source>
    </source>
</evidence>
<evidence type="ECO:0000303" key="19">
    <source>
    </source>
</evidence>
<evidence type="ECO:0000303" key="20">
    <source>
    </source>
</evidence>
<evidence type="ECO:0000303" key="21">
    <source>
    </source>
</evidence>
<evidence type="ECO:0000305" key="22">
    <source>
    </source>
</evidence>
<evidence type="ECO:0000305" key="23">
    <source>
    </source>
</evidence>
<evidence type="ECO:0000312" key="24">
    <source>
        <dbReference type="SGD" id="S000000238"/>
    </source>
</evidence>
<evidence type="ECO:0007829" key="25">
    <source>
        <dbReference type="PDB" id="1G6Q"/>
    </source>
</evidence>
<comment type="function">
    <text evidence="3 4 5 6 7 9 10 11 12 13 14 15 16 17">S-adenosyl-L-methionine-dependent protein-arginine N-methyltransferase that catalyzes both the mono- and asymmetric (type I) dimethylation of the guanidino nitrogens of arginine residues in a variety of RNA-binding proteins such as heterogeneous nuclear ribonucleoproteins (hnRNPs) and small nuclear ribonucleoproteins (snRNPs) (PubMed:8647869, PubMed:8668183). Methylates NAB2, NPL3, HRP1 and YRA1, shuttling hnRNPs involved in mRNA processing and export, facilitating their export out of the nucleus (PubMed:10652296, PubMed:11779864, PubMed:15314027, PubMed:8668183, PubMed:9499403). Methylation of NPL3 weakens its interaction with THO2, a component of the TREX (transcription/export) complex important for transcriptional elongation and recruitment of mRNA export factors (PubMed:15314027, PubMed:20053728). Methylates the hnRNP HRB1, but does not influence its subcellular location (PubMed:9499403). Methylates the nucleolar proteins GAR1, NOP1 and NSR1 (PubMed:12756332). Methylates the snRNP SNP1 and modulates the cotranscriptional recruitment of splicing factors (PubMed:20823272). Dimethylates free histone H4 (HHF1/HHF2) at 'Arg-4' (H4R3me2a) and plays a role in preservation and establishment of silent chromatin domains (PubMed:12097318, PubMed:17158743). Mono- and dimethylates ribosomal protein S2 (RPS2) at 'Arg-11' (PubMed:20035717). Methylates the catalytic subunit of the SWI/SNF chromatin-remodeling complex SNF2 (PubMed:22997150).</text>
</comment>
<comment type="catalytic activity">
    <reaction evidence="15 23">
        <text>L-arginyl-[protein] + S-adenosyl-L-methionine = N(omega)-methyl-L-arginyl-[protein] + S-adenosyl-L-homocysteine + H(+)</text>
        <dbReference type="Rhea" id="RHEA:48100"/>
        <dbReference type="Rhea" id="RHEA-COMP:10532"/>
        <dbReference type="Rhea" id="RHEA-COMP:11990"/>
        <dbReference type="ChEBI" id="CHEBI:15378"/>
        <dbReference type="ChEBI" id="CHEBI:29965"/>
        <dbReference type="ChEBI" id="CHEBI:57856"/>
        <dbReference type="ChEBI" id="CHEBI:59789"/>
        <dbReference type="ChEBI" id="CHEBI:65280"/>
    </reaction>
    <physiologicalReaction direction="left-to-right" evidence="15 23">
        <dbReference type="Rhea" id="RHEA:48101"/>
    </physiologicalReaction>
</comment>
<comment type="catalytic activity">
    <reaction evidence="15 23">
        <text>L-arginyl-[protein] + 2 S-adenosyl-L-methionine = N(omega),N(omega)-dimethyl-L-arginyl-[protein] + 2 S-adenosyl-L-homocysteine + 2 H(+)</text>
        <dbReference type="Rhea" id="RHEA:48096"/>
        <dbReference type="Rhea" id="RHEA-COMP:10532"/>
        <dbReference type="Rhea" id="RHEA-COMP:11991"/>
        <dbReference type="ChEBI" id="CHEBI:15378"/>
        <dbReference type="ChEBI" id="CHEBI:29965"/>
        <dbReference type="ChEBI" id="CHEBI:57856"/>
        <dbReference type="ChEBI" id="CHEBI:59789"/>
        <dbReference type="ChEBI" id="CHEBI:61897"/>
        <dbReference type="EC" id="2.1.1.319"/>
    </reaction>
    <physiologicalReaction direction="left-to-right" evidence="15 23">
        <dbReference type="Rhea" id="RHEA:48097"/>
    </physiologicalReaction>
</comment>
<comment type="subunit">
    <text evidence="4 14">Homodimer. The dimers can then associate to form a ring-shaped homohexamer. Interacts with NPL3, BRE5, MTR4, SNF2, SUM1, and SSD1.</text>
</comment>
<comment type="interaction">
    <interactant intactId="EBI-8394">
        <id>P38074</id>
    </interactant>
    <interactant intactId="EBI-28528">
        <id>P53741</id>
        <label>BRE5</label>
    </interactant>
    <organismsDiffer>false</organismsDiffer>
    <experiments>2</experiments>
</comment>
<comment type="interaction">
    <interactant intactId="EBI-8394">
        <id>P38074</id>
    </interactant>
    <interactant intactId="EBI-5569">
        <id>P22204</id>
        <label>DBF2</label>
    </interactant>
    <organismsDiffer>false</organismsDiffer>
    <experiments>4</experiments>
</comment>
<comment type="interaction">
    <interactant intactId="EBI-8394">
        <id>P38074</id>
    </interactant>
    <interactant intactId="EBI-8394">
        <id>P38074</id>
        <label>HMT1</label>
    </interactant>
    <organismsDiffer>false</organismsDiffer>
    <experiments>3</experiments>
</comment>
<comment type="interaction">
    <interactant intactId="EBI-8394">
        <id>P38074</id>
    </interactant>
    <interactant intactId="EBI-11592">
        <id>P47047</id>
        <label>MTR4</label>
    </interactant>
    <organismsDiffer>false</organismsDiffer>
    <experiments>2</experiments>
</comment>
<comment type="interaction">
    <interactant intactId="EBI-8394">
        <id>P38074</id>
    </interactant>
    <interactant intactId="EBI-11770">
        <id>P32505</id>
        <label>NAB2</label>
    </interactant>
    <organismsDiffer>false</organismsDiffer>
    <experiments>2</experiments>
</comment>
<comment type="interaction">
    <interactant intactId="EBI-8394">
        <id>P38074</id>
    </interactant>
    <interactant intactId="EBI-12114">
        <id>Q01560</id>
        <label>NPL3</label>
    </interactant>
    <organismsDiffer>false</organismsDiffer>
    <experiments>9</experiments>
</comment>
<comment type="interaction">
    <interactant intactId="EBI-8394">
        <id>P38074</id>
    </interactant>
    <interactant intactId="EBI-12752">
        <id>P23595</id>
        <label>PPH22</label>
    </interactant>
    <organismsDiffer>false</organismsDiffer>
    <experiments>3</experiments>
</comment>
<comment type="interaction">
    <interactant intactId="EBI-8394">
        <id>P38074</id>
    </interactant>
    <interactant intactId="EBI-17526">
        <id>P22082</id>
        <label>SNF2</label>
    </interactant>
    <organismsDiffer>false</organismsDiffer>
    <experiments>3</experiments>
</comment>
<comment type="interaction">
    <interactant intactId="EBI-8394">
        <id>P38074</id>
    </interactant>
    <interactant intactId="EBI-18153">
        <id>P24276</id>
        <label>SSD1</label>
    </interactant>
    <organismsDiffer>false</organismsDiffer>
    <experiments>2</experiments>
</comment>
<comment type="interaction">
    <interactant intactId="EBI-8394">
        <id>P38074</id>
    </interactant>
    <interactant intactId="EBI-18547">
        <id>P46676</id>
        <label>SUM1</label>
    </interactant>
    <organismsDiffer>false</organismsDiffer>
    <experiments>2</experiments>
</comment>
<comment type="subcellular location">
    <subcellularLocation>
        <location evidence="16">Nucleus</location>
    </subcellularLocation>
</comment>
<comment type="miscellaneous">
    <text evidence="8">Present with 37600 molecules/cell in log phase SD medium.</text>
</comment>
<comment type="similarity">
    <text evidence="2">Belongs to the class I-like SAM-binding methyltransferase superfamily. Protein arginine N-methyltransferase family.</text>
</comment>
<sequence length="348" mass="39786">MSKTAVKDSATEKTKLSESEQHYFNSYDHYGIHEEMLQDTVRTLSYRNAIIQNKDLFKDKIVLDVGCGTGILSMFAAKHGAKHVIGVDMSSIIEMAKELVELNGFSDKITLLRGKLEDVHLPFPKVDIIISEWMGYFLLYESMMDTVLYARDHYLVEGGLIFPDKCSIHLAGLEDSQYKDEKLNYWQDVYGFDYSPFVPLVLHEPIVDTVERNNVNTTSDKLIEFDLNTVKISDLAFKSNFKLTAKRQDMINGIVTWFDIVFPAPKGKRPVEFSTGPHAPYTHWKQTIFYFPDDLDAETGDTIEGELVCSPNEKNNRDLNIKISYKFESNGIDGNSRSRKNEGSYLMH</sequence>